<proteinExistence type="inferred from homology"/>
<organism>
    <name type="scientific">Xanthomonas campestris pv. campestris (strain 8004)</name>
    <dbReference type="NCBI Taxonomy" id="314565"/>
    <lineage>
        <taxon>Bacteria</taxon>
        <taxon>Pseudomonadati</taxon>
        <taxon>Pseudomonadota</taxon>
        <taxon>Gammaproteobacteria</taxon>
        <taxon>Lysobacterales</taxon>
        <taxon>Lysobacteraceae</taxon>
        <taxon>Xanthomonas</taxon>
    </lineage>
</organism>
<name>DADA_XANC8</name>
<feature type="chain" id="PRO_1000066123" description="D-amino acid dehydrogenase">
    <location>
        <begin position="1"/>
        <end position="429"/>
    </location>
</feature>
<feature type="binding site" evidence="1">
    <location>
        <begin position="3"/>
        <end position="17"/>
    </location>
    <ligand>
        <name>FAD</name>
        <dbReference type="ChEBI" id="CHEBI:57692"/>
    </ligand>
</feature>
<sequence>MRVLILGSGVIGTTTAWYLAQSGCEVTVVDRQPASGLETSYANAGQLSFGYTSPWAAPGVPGKAVKWLFEQHAPLSIRPTRDLRQLAWLSQMLRNCTAERYAVNKARMVRLSDYSRDCLNALRASTGLEFEGRQLGTTQLFRTQQQLDAAAQDIEVLAQYGVPYELLSPAQIAQYEPGLAGGGAQMAGALHLPEDQTGDCRLFTQRLADLATQAGVQFRYGQQIERLEHAGGEITGVQIDGRLVTADRYVLALGSYSADLLLSLGLHLPVYPLKGYSLTIPIVDAQRAPTSTVLDESYKIALTRFDERIRVGGMAEVAGFDLSLNPRRRATLEMVVNDLFPGAGDLAQAEFWTGLRPATPDGTPVVGATPYANLFLNTGHGTLGWTMACGSGRYLADLMQGRTPEIDTEGLDVFRYLSTRSTRPHREAA</sequence>
<protein>
    <recommendedName>
        <fullName evidence="1">D-amino acid dehydrogenase</fullName>
        <ecNumber evidence="1">1.4.99.-</ecNumber>
    </recommendedName>
</protein>
<reference key="1">
    <citation type="journal article" date="2005" name="Genome Res.">
        <title>Comparative and functional genomic analyses of the pathogenicity of phytopathogen Xanthomonas campestris pv. campestris.</title>
        <authorList>
            <person name="Qian W."/>
            <person name="Jia Y."/>
            <person name="Ren S.-X."/>
            <person name="He Y.-Q."/>
            <person name="Feng J.-X."/>
            <person name="Lu L.-F."/>
            <person name="Sun Q."/>
            <person name="Ying G."/>
            <person name="Tang D.-J."/>
            <person name="Tang H."/>
            <person name="Wu W."/>
            <person name="Hao P."/>
            <person name="Wang L."/>
            <person name="Jiang B.-L."/>
            <person name="Zeng S."/>
            <person name="Gu W.-Y."/>
            <person name="Lu G."/>
            <person name="Rong L."/>
            <person name="Tian Y."/>
            <person name="Yao Z."/>
            <person name="Fu G."/>
            <person name="Chen B."/>
            <person name="Fang R."/>
            <person name="Qiang B."/>
            <person name="Chen Z."/>
            <person name="Zhao G.-P."/>
            <person name="Tang J.-L."/>
            <person name="He C."/>
        </authorList>
    </citation>
    <scope>NUCLEOTIDE SEQUENCE [LARGE SCALE GENOMIC DNA]</scope>
    <source>
        <strain>8004</strain>
    </source>
</reference>
<keyword id="KW-0274">FAD</keyword>
<keyword id="KW-0285">Flavoprotein</keyword>
<keyword id="KW-0560">Oxidoreductase</keyword>
<accession>Q4UQB4</accession>
<dbReference type="EC" id="1.4.99.-" evidence="1"/>
<dbReference type="EMBL" id="CP000050">
    <property type="protein sequence ID" value="AAY50759.1"/>
    <property type="molecule type" value="Genomic_DNA"/>
</dbReference>
<dbReference type="RefSeq" id="WP_011038731.1">
    <property type="nucleotide sequence ID" value="NZ_CP155948.1"/>
</dbReference>
<dbReference type="SMR" id="Q4UQB4"/>
<dbReference type="KEGG" id="xcb:XC_3719"/>
<dbReference type="HOGENOM" id="CLU_007884_9_2_6"/>
<dbReference type="UniPathway" id="UPA00043">
    <property type="reaction ID" value="UER00498"/>
</dbReference>
<dbReference type="Proteomes" id="UP000000420">
    <property type="component" value="Chromosome"/>
</dbReference>
<dbReference type="GO" id="GO:0005737">
    <property type="term" value="C:cytoplasm"/>
    <property type="evidence" value="ECO:0007669"/>
    <property type="project" value="TreeGrafter"/>
</dbReference>
<dbReference type="GO" id="GO:0005886">
    <property type="term" value="C:plasma membrane"/>
    <property type="evidence" value="ECO:0007669"/>
    <property type="project" value="TreeGrafter"/>
</dbReference>
<dbReference type="GO" id="GO:0008718">
    <property type="term" value="F:D-amino-acid dehydrogenase activity"/>
    <property type="evidence" value="ECO:0007669"/>
    <property type="project" value="UniProtKB-UniRule"/>
</dbReference>
<dbReference type="GO" id="GO:0055130">
    <property type="term" value="P:D-alanine catabolic process"/>
    <property type="evidence" value="ECO:0007669"/>
    <property type="project" value="UniProtKB-UniPathway"/>
</dbReference>
<dbReference type="FunFam" id="3.50.50.60:FF:000020">
    <property type="entry name" value="D-amino acid dehydrogenase"/>
    <property type="match status" value="1"/>
</dbReference>
<dbReference type="Gene3D" id="3.30.9.10">
    <property type="entry name" value="D-Amino Acid Oxidase, subunit A, domain 2"/>
    <property type="match status" value="1"/>
</dbReference>
<dbReference type="Gene3D" id="3.50.50.60">
    <property type="entry name" value="FAD/NAD(P)-binding domain"/>
    <property type="match status" value="2"/>
</dbReference>
<dbReference type="HAMAP" id="MF_01202">
    <property type="entry name" value="DadA"/>
    <property type="match status" value="1"/>
</dbReference>
<dbReference type="InterPro" id="IPR023080">
    <property type="entry name" value="DadA"/>
</dbReference>
<dbReference type="InterPro" id="IPR006076">
    <property type="entry name" value="FAD-dep_OxRdtase"/>
</dbReference>
<dbReference type="InterPro" id="IPR036188">
    <property type="entry name" value="FAD/NAD-bd_sf"/>
</dbReference>
<dbReference type="NCBIfam" id="NF001933">
    <property type="entry name" value="PRK00711.1"/>
    <property type="match status" value="1"/>
</dbReference>
<dbReference type="PANTHER" id="PTHR13847:SF280">
    <property type="entry name" value="D-AMINO ACID DEHYDROGENASE"/>
    <property type="match status" value="1"/>
</dbReference>
<dbReference type="PANTHER" id="PTHR13847">
    <property type="entry name" value="SARCOSINE DEHYDROGENASE-RELATED"/>
    <property type="match status" value="1"/>
</dbReference>
<dbReference type="Pfam" id="PF01266">
    <property type="entry name" value="DAO"/>
    <property type="match status" value="1"/>
</dbReference>
<dbReference type="SUPFAM" id="SSF54373">
    <property type="entry name" value="FAD-linked reductases, C-terminal domain"/>
    <property type="match status" value="1"/>
</dbReference>
<dbReference type="SUPFAM" id="SSF51905">
    <property type="entry name" value="FAD/NAD(P)-binding domain"/>
    <property type="match status" value="1"/>
</dbReference>
<evidence type="ECO:0000255" key="1">
    <source>
        <dbReference type="HAMAP-Rule" id="MF_01202"/>
    </source>
</evidence>
<comment type="function">
    <text evidence="1">Oxidative deamination of D-amino acids.</text>
</comment>
<comment type="catalytic activity">
    <reaction evidence="1">
        <text>a D-alpha-amino acid + A + H2O = a 2-oxocarboxylate + AH2 + NH4(+)</text>
        <dbReference type="Rhea" id="RHEA:18125"/>
        <dbReference type="ChEBI" id="CHEBI:13193"/>
        <dbReference type="ChEBI" id="CHEBI:15377"/>
        <dbReference type="ChEBI" id="CHEBI:17499"/>
        <dbReference type="ChEBI" id="CHEBI:28938"/>
        <dbReference type="ChEBI" id="CHEBI:35179"/>
        <dbReference type="ChEBI" id="CHEBI:59871"/>
    </reaction>
</comment>
<comment type="cofactor">
    <cofactor evidence="1">
        <name>FAD</name>
        <dbReference type="ChEBI" id="CHEBI:57692"/>
    </cofactor>
</comment>
<comment type="pathway">
    <text>Amino-acid degradation; D-alanine degradation; NH(3) and pyruvate from D-alanine: step 1/1.</text>
</comment>
<comment type="similarity">
    <text evidence="1">Belongs to the DadA oxidoreductase family.</text>
</comment>
<gene>
    <name evidence="1" type="primary">dadA</name>
    <name type="ordered locus">XC_3719</name>
</gene>